<accession>Q8PJ48</accession>
<proteinExistence type="inferred from homology"/>
<evidence type="ECO:0000255" key="1">
    <source>
        <dbReference type="HAMAP-Rule" id="MF_01351"/>
    </source>
</evidence>
<gene>
    <name evidence="1" type="primary">nuoI</name>
    <name type="ordered locus">XAC2696</name>
</gene>
<feature type="chain" id="PRO_0000250950" description="NADH-quinone oxidoreductase subunit I">
    <location>
        <begin position="1"/>
        <end position="162"/>
    </location>
</feature>
<feature type="domain" description="4Fe-4S ferredoxin-type 1" evidence="1">
    <location>
        <begin position="53"/>
        <end position="83"/>
    </location>
</feature>
<feature type="domain" description="4Fe-4S ferredoxin-type 2" evidence="1">
    <location>
        <begin position="93"/>
        <end position="122"/>
    </location>
</feature>
<feature type="binding site" evidence="1">
    <location>
        <position position="63"/>
    </location>
    <ligand>
        <name>[4Fe-4S] cluster</name>
        <dbReference type="ChEBI" id="CHEBI:49883"/>
        <label>1</label>
    </ligand>
</feature>
<feature type="binding site" evidence="1">
    <location>
        <position position="66"/>
    </location>
    <ligand>
        <name>[4Fe-4S] cluster</name>
        <dbReference type="ChEBI" id="CHEBI:49883"/>
        <label>1</label>
    </ligand>
</feature>
<feature type="binding site" evidence="1">
    <location>
        <position position="69"/>
    </location>
    <ligand>
        <name>[4Fe-4S] cluster</name>
        <dbReference type="ChEBI" id="CHEBI:49883"/>
        <label>1</label>
    </ligand>
</feature>
<feature type="binding site" evidence="1">
    <location>
        <position position="73"/>
    </location>
    <ligand>
        <name>[4Fe-4S] cluster</name>
        <dbReference type="ChEBI" id="CHEBI:49883"/>
        <label>2</label>
    </ligand>
</feature>
<feature type="binding site" evidence="1">
    <location>
        <position position="102"/>
    </location>
    <ligand>
        <name>[4Fe-4S] cluster</name>
        <dbReference type="ChEBI" id="CHEBI:49883"/>
        <label>2</label>
    </ligand>
</feature>
<feature type="binding site" evidence="1">
    <location>
        <position position="105"/>
    </location>
    <ligand>
        <name>[4Fe-4S] cluster</name>
        <dbReference type="ChEBI" id="CHEBI:49883"/>
        <label>2</label>
    </ligand>
</feature>
<feature type="binding site" evidence="1">
    <location>
        <position position="108"/>
    </location>
    <ligand>
        <name>[4Fe-4S] cluster</name>
        <dbReference type="ChEBI" id="CHEBI:49883"/>
        <label>2</label>
    </ligand>
</feature>
<feature type="binding site" evidence="1">
    <location>
        <position position="112"/>
    </location>
    <ligand>
        <name>[4Fe-4S] cluster</name>
        <dbReference type="ChEBI" id="CHEBI:49883"/>
        <label>1</label>
    </ligand>
</feature>
<organism>
    <name type="scientific">Xanthomonas axonopodis pv. citri (strain 306)</name>
    <dbReference type="NCBI Taxonomy" id="190486"/>
    <lineage>
        <taxon>Bacteria</taxon>
        <taxon>Pseudomonadati</taxon>
        <taxon>Pseudomonadota</taxon>
        <taxon>Gammaproteobacteria</taxon>
        <taxon>Lysobacterales</taxon>
        <taxon>Lysobacteraceae</taxon>
        <taxon>Xanthomonas</taxon>
    </lineage>
</organism>
<comment type="function">
    <text evidence="1">NDH-1 shuttles electrons from NADH, via FMN and iron-sulfur (Fe-S) centers, to quinones in the respiratory chain. The immediate electron acceptor for the enzyme in this species is believed to be ubiquinone. Couples the redox reaction to proton translocation (for every two electrons transferred, four hydrogen ions are translocated across the cytoplasmic membrane), and thus conserves the redox energy in a proton gradient.</text>
</comment>
<comment type="catalytic activity">
    <reaction evidence="1">
        <text>a quinone + NADH + 5 H(+)(in) = a quinol + NAD(+) + 4 H(+)(out)</text>
        <dbReference type="Rhea" id="RHEA:57888"/>
        <dbReference type="ChEBI" id="CHEBI:15378"/>
        <dbReference type="ChEBI" id="CHEBI:24646"/>
        <dbReference type="ChEBI" id="CHEBI:57540"/>
        <dbReference type="ChEBI" id="CHEBI:57945"/>
        <dbReference type="ChEBI" id="CHEBI:132124"/>
    </reaction>
</comment>
<comment type="cofactor">
    <cofactor evidence="1">
        <name>[4Fe-4S] cluster</name>
        <dbReference type="ChEBI" id="CHEBI:49883"/>
    </cofactor>
    <text evidence="1">Binds 2 [4Fe-4S] clusters per subunit.</text>
</comment>
<comment type="subunit">
    <text evidence="1">NDH-1 is composed of 14 different subunits. Subunits NuoA, H, J, K, L, M, N constitute the membrane sector of the complex.</text>
</comment>
<comment type="subcellular location">
    <subcellularLocation>
        <location evidence="1">Cell inner membrane</location>
        <topology evidence="1">Peripheral membrane protein</topology>
    </subcellularLocation>
</comment>
<comment type="similarity">
    <text evidence="1">Belongs to the complex I 23 kDa subunit family.</text>
</comment>
<sequence>MNKITHYFKSLLLLELLGGLWLTLKYTFKPKYTVLYPMEKFPQSPRFRGLHALRRYPNGEERCIACKLCEAVCPALAITIDSAKREDGTRRTTRYDIDLFKCIFCGFCEESCPVDSIVETHILEYHFEKRGENIVNKPQLLAIGDRLETEIAERRAADAAFR</sequence>
<protein>
    <recommendedName>
        <fullName evidence="1">NADH-quinone oxidoreductase subunit I</fullName>
        <ecNumber evidence="1">7.1.1.-</ecNumber>
    </recommendedName>
    <alternativeName>
        <fullName evidence="1">NADH dehydrogenase I subunit I</fullName>
    </alternativeName>
    <alternativeName>
        <fullName evidence="1">NDH-1 subunit I</fullName>
    </alternativeName>
</protein>
<reference key="1">
    <citation type="journal article" date="2002" name="Nature">
        <title>Comparison of the genomes of two Xanthomonas pathogens with differing host specificities.</title>
        <authorList>
            <person name="da Silva A.C.R."/>
            <person name="Ferro J.A."/>
            <person name="Reinach F.C."/>
            <person name="Farah C.S."/>
            <person name="Furlan L.R."/>
            <person name="Quaggio R.B."/>
            <person name="Monteiro-Vitorello C.B."/>
            <person name="Van Sluys M.A."/>
            <person name="Almeida N.F. Jr."/>
            <person name="Alves L.M.C."/>
            <person name="do Amaral A.M."/>
            <person name="Bertolini M.C."/>
            <person name="Camargo L.E.A."/>
            <person name="Camarotte G."/>
            <person name="Cannavan F."/>
            <person name="Cardozo J."/>
            <person name="Chambergo F."/>
            <person name="Ciapina L.P."/>
            <person name="Cicarelli R.M.B."/>
            <person name="Coutinho L.L."/>
            <person name="Cursino-Santos J.R."/>
            <person name="El-Dorry H."/>
            <person name="Faria J.B."/>
            <person name="Ferreira A.J.S."/>
            <person name="Ferreira R.C.C."/>
            <person name="Ferro M.I.T."/>
            <person name="Formighieri E.F."/>
            <person name="Franco M.C."/>
            <person name="Greggio C.C."/>
            <person name="Gruber A."/>
            <person name="Katsuyama A.M."/>
            <person name="Kishi L.T."/>
            <person name="Leite R.P."/>
            <person name="Lemos E.G.M."/>
            <person name="Lemos M.V.F."/>
            <person name="Locali E.C."/>
            <person name="Machado M.A."/>
            <person name="Madeira A.M.B.N."/>
            <person name="Martinez-Rossi N.M."/>
            <person name="Martins E.C."/>
            <person name="Meidanis J."/>
            <person name="Menck C.F.M."/>
            <person name="Miyaki C.Y."/>
            <person name="Moon D.H."/>
            <person name="Moreira L.M."/>
            <person name="Novo M.T.M."/>
            <person name="Okura V.K."/>
            <person name="Oliveira M.C."/>
            <person name="Oliveira V.R."/>
            <person name="Pereira H.A."/>
            <person name="Rossi A."/>
            <person name="Sena J.A.D."/>
            <person name="Silva C."/>
            <person name="de Souza R.F."/>
            <person name="Spinola L.A.F."/>
            <person name="Takita M.A."/>
            <person name="Tamura R.E."/>
            <person name="Teixeira E.C."/>
            <person name="Tezza R.I.D."/>
            <person name="Trindade dos Santos M."/>
            <person name="Truffi D."/>
            <person name="Tsai S.M."/>
            <person name="White F.F."/>
            <person name="Setubal J.C."/>
            <person name="Kitajima J.P."/>
        </authorList>
    </citation>
    <scope>NUCLEOTIDE SEQUENCE [LARGE SCALE GENOMIC DNA]</scope>
    <source>
        <strain>306</strain>
    </source>
</reference>
<keyword id="KW-0004">4Fe-4S</keyword>
<keyword id="KW-0997">Cell inner membrane</keyword>
<keyword id="KW-1003">Cell membrane</keyword>
<keyword id="KW-0408">Iron</keyword>
<keyword id="KW-0411">Iron-sulfur</keyword>
<keyword id="KW-0472">Membrane</keyword>
<keyword id="KW-0479">Metal-binding</keyword>
<keyword id="KW-0520">NAD</keyword>
<keyword id="KW-0874">Quinone</keyword>
<keyword id="KW-0677">Repeat</keyword>
<keyword id="KW-1278">Translocase</keyword>
<keyword id="KW-0830">Ubiquinone</keyword>
<dbReference type="EC" id="7.1.1.-" evidence="1"/>
<dbReference type="EMBL" id="AE008923">
    <property type="protein sequence ID" value="AAM37542.1"/>
    <property type="molecule type" value="Genomic_DNA"/>
</dbReference>
<dbReference type="RefSeq" id="WP_003485557.1">
    <property type="nucleotide sequence ID" value="NC_003919.1"/>
</dbReference>
<dbReference type="SMR" id="Q8PJ48"/>
<dbReference type="GeneID" id="97510983"/>
<dbReference type="KEGG" id="xac:XAC2696"/>
<dbReference type="eggNOG" id="COG1143">
    <property type="taxonomic scope" value="Bacteria"/>
</dbReference>
<dbReference type="HOGENOM" id="CLU_067218_5_1_6"/>
<dbReference type="Proteomes" id="UP000000576">
    <property type="component" value="Chromosome"/>
</dbReference>
<dbReference type="GO" id="GO:0005886">
    <property type="term" value="C:plasma membrane"/>
    <property type="evidence" value="ECO:0007669"/>
    <property type="project" value="UniProtKB-SubCell"/>
</dbReference>
<dbReference type="GO" id="GO:0051539">
    <property type="term" value="F:4 iron, 4 sulfur cluster binding"/>
    <property type="evidence" value="ECO:0007669"/>
    <property type="project" value="UniProtKB-KW"/>
</dbReference>
<dbReference type="GO" id="GO:0005506">
    <property type="term" value="F:iron ion binding"/>
    <property type="evidence" value="ECO:0007669"/>
    <property type="project" value="UniProtKB-UniRule"/>
</dbReference>
<dbReference type="GO" id="GO:0050136">
    <property type="term" value="F:NADH:ubiquinone reductase (non-electrogenic) activity"/>
    <property type="evidence" value="ECO:0007669"/>
    <property type="project" value="UniProtKB-UniRule"/>
</dbReference>
<dbReference type="GO" id="GO:0048038">
    <property type="term" value="F:quinone binding"/>
    <property type="evidence" value="ECO:0007669"/>
    <property type="project" value="UniProtKB-KW"/>
</dbReference>
<dbReference type="GO" id="GO:0009060">
    <property type="term" value="P:aerobic respiration"/>
    <property type="evidence" value="ECO:0007669"/>
    <property type="project" value="TreeGrafter"/>
</dbReference>
<dbReference type="FunFam" id="3.30.70.3270:FF:000003">
    <property type="entry name" value="NADH-quinone oxidoreductase subunit I"/>
    <property type="match status" value="1"/>
</dbReference>
<dbReference type="Gene3D" id="3.30.70.3270">
    <property type="match status" value="1"/>
</dbReference>
<dbReference type="HAMAP" id="MF_01351">
    <property type="entry name" value="NDH1_NuoI"/>
    <property type="match status" value="1"/>
</dbReference>
<dbReference type="InterPro" id="IPR017896">
    <property type="entry name" value="4Fe4S_Fe-S-bd"/>
</dbReference>
<dbReference type="InterPro" id="IPR017900">
    <property type="entry name" value="4Fe4S_Fe_S_CS"/>
</dbReference>
<dbReference type="InterPro" id="IPR010226">
    <property type="entry name" value="NADH_quinone_OxRdtase_chainI"/>
</dbReference>
<dbReference type="NCBIfam" id="TIGR01971">
    <property type="entry name" value="NuoI"/>
    <property type="match status" value="1"/>
</dbReference>
<dbReference type="NCBIfam" id="NF004538">
    <property type="entry name" value="PRK05888.1-4"/>
    <property type="match status" value="1"/>
</dbReference>
<dbReference type="NCBIfam" id="NF004539">
    <property type="entry name" value="PRK05888.1-5"/>
    <property type="match status" value="1"/>
</dbReference>
<dbReference type="PANTHER" id="PTHR10849:SF20">
    <property type="entry name" value="NADH DEHYDROGENASE [UBIQUINONE] IRON-SULFUR PROTEIN 8, MITOCHONDRIAL"/>
    <property type="match status" value="1"/>
</dbReference>
<dbReference type="PANTHER" id="PTHR10849">
    <property type="entry name" value="NADH DEHYDROGENASE UBIQUINONE IRON-SULFUR PROTEIN 8, MITOCHONDRIAL"/>
    <property type="match status" value="1"/>
</dbReference>
<dbReference type="Pfam" id="PF12838">
    <property type="entry name" value="Fer4_7"/>
    <property type="match status" value="1"/>
</dbReference>
<dbReference type="SUPFAM" id="SSF54862">
    <property type="entry name" value="4Fe-4S ferredoxins"/>
    <property type="match status" value="1"/>
</dbReference>
<dbReference type="PROSITE" id="PS00198">
    <property type="entry name" value="4FE4S_FER_1"/>
    <property type="match status" value="2"/>
</dbReference>
<dbReference type="PROSITE" id="PS51379">
    <property type="entry name" value="4FE4S_FER_2"/>
    <property type="match status" value="2"/>
</dbReference>
<name>NUOI_XANAC</name>